<reference key="1">
    <citation type="submission" date="2007-11" db="EMBL/GenBank/DDBJ databases">
        <authorList>
            <consortium name="The Salmonella enterica serovar Paratyphi B Genome Sequencing Project"/>
            <person name="McClelland M."/>
            <person name="Sanderson E.K."/>
            <person name="Porwollik S."/>
            <person name="Spieth J."/>
            <person name="Clifton W.S."/>
            <person name="Fulton R."/>
            <person name="Cordes M."/>
            <person name="Wollam A."/>
            <person name="Shah N."/>
            <person name="Pepin K."/>
            <person name="Bhonagiri V."/>
            <person name="Nash W."/>
            <person name="Johnson M."/>
            <person name="Thiruvilangam P."/>
            <person name="Wilson R."/>
        </authorList>
    </citation>
    <scope>NUCLEOTIDE SEQUENCE [LARGE SCALE GENOMIC DNA]</scope>
    <source>
        <strain>ATCC BAA-1250 / SPB7</strain>
    </source>
</reference>
<gene>
    <name evidence="1" type="primary">asnA</name>
    <name type="ordered locus">SPAB_04821</name>
</gene>
<comment type="catalytic activity">
    <reaction evidence="1">
        <text>L-aspartate + NH4(+) + ATP = L-asparagine + AMP + diphosphate + H(+)</text>
        <dbReference type="Rhea" id="RHEA:11372"/>
        <dbReference type="ChEBI" id="CHEBI:15378"/>
        <dbReference type="ChEBI" id="CHEBI:28938"/>
        <dbReference type="ChEBI" id="CHEBI:29991"/>
        <dbReference type="ChEBI" id="CHEBI:30616"/>
        <dbReference type="ChEBI" id="CHEBI:33019"/>
        <dbReference type="ChEBI" id="CHEBI:58048"/>
        <dbReference type="ChEBI" id="CHEBI:456215"/>
        <dbReference type="EC" id="6.3.1.1"/>
    </reaction>
</comment>
<comment type="pathway">
    <text evidence="1">Amino-acid biosynthesis; L-asparagine biosynthesis; L-asparagine from L-aspartate (ammonia route): step 1/1.</text>
</comment>
<comment type="subcellular location">
    <subcellularLocation>
        <location evidence="1">Cytoplasm</location>
    </subcellularLocation>
</comment>
<comment type="similarity">
    <text evidence="1">Belongs to the class-II aminoacyl-tRNA synthetase family. AsnA subfamily.</text>
</comment>
<evidence type="ECO:0000255" key="1">
    <source>
        <dbReference type="HAMAP-Rule" id="MF_00555"/>
    </source>
</evidence>
<dbReference type="EC" id="6.3.1.1" evidence="1"/>
<dbReference type="EMBL" id="CP000886">
    <property type="protein sequence ID" value="ABX70132.1"/>
    <property type="molecule type" value="Genomic_DNA"/>
</dbReference>
<dbReference type="RefSeq" id="WP_000845118.1">
    <property type="nucleotide sequence ID" value="NC_010102.1"/>
</dbReference>
<dbReference type="SMR" id="A9MXC1"/>
<dbReference type="GeneID" id="66758166"/>
<dbReference type="KEGG" id="spq:SPAB_04821"/>
<dbReference type="PATRIC" id="fig|1016998.12.peg.4535"/>
<dbReference type="HOGENOM" id="CLU_071543_0_0_6"/>
<dbReference type="BioCyc" id="SENT1016998:SPAB_RS19575-MONOMER"/>
<dbReference type="UniPathway" id="UPA00134">
    <property type="reaction ID" value="UER00194"/>
</dbReference>
<dbReference type="Proteomes" id="UP000008556">
    <property type="component" value="Chromosome"/>
</dbReference>
<dbReference type="GO" id="GO:0005829">
    <property type="term" value="C:cytosol"/>
    <property type="evidence" value="ECO:0007669"/>
    <property type="project" value="TreeGrafter"/>
</dbReference>
<dbReference type="GO" id="GO:0004071">
    <property type="term" value="F:aspartate-ammonia ligase activity"/>
    <property type="evidence" value="ECO:0007669"/>
    <property type="project" value="UniProtKB-UniRule"/>
</dbReference>
<dbReference type="GO" id="GO:0005524">
    <property type="term" value="F:ATP binding"/>
    <property type="evidence" value="ECO:0007669"/>
    <property type="project" value="UniProtKB-UniRule"/>
</dbReference>
<dbReference type="GO" id="GO:0070981">
    <property type="term" value="P:L-asparagine biosynthetic process"/>
    <property type="evidence" value="ECO:0007669"/>
    <property type="project" value="UniProtKB-UniRule"/>
</dbReference>
<dbReference type="CDD" id="cd00645">
    <property type="entry name" value="AsnA"/>
    <property type="match status" value="1"/>
</dbReference>
<dbReference type="FunFam" id="3.30.930.10:FF:000025">
    <property type="entry name" value="Aspartate--ammonia ligase"/>
    <property type="match status" value="1"/>
</dbReference>
<dbReference type="Gene3D" id="3.30.930.10">
    <property type="entry name" value="Bira Bifunctional Protein, Domain 2"/>
    <property type="match status" value="1"/>
</dbReference>
<dbReference type="HAMAP" id="MF_00555">
    <property type="entry name" value="AsnA"/>
    <property type="match status" value="1"/>
</dbReference>
<dbReference type="InterPro" id="IPR006195">
    <property type="entry name" value="aa-tRNA-synth_II"/>
</dbReference>
<dbReference type="InterPro" id="IPR045864">
    <property type="entry name" value="aa-tRNA-synth_II/BPL/LPL"/>
</dbReference>
<dbReference type="InterPro" id="IPR004618">
    <property type="entry name" value="AsnA"/>
</dbReference>
<dbReference type="NCBIfam" id="TIGR00669">
    <property type="entry name" value="asnA"/>
    <property type="match status" value="1"/>
</dbReference>
<dbReference type="PANTHER" id="PTHR30073">
    <property type="entry name" value="ASPARTATE--AMMONIA LIGASE"/>
    <property type="match status" value="1"/>
</dbReference>
<dbReference type="PANTHER" id="PTHR30073:SF5">
    <property type="entry name" value="ASPARTATE--AMMONIA LIGASE"/>
    <property type="match status" value="1"/>
</dbReference>
<dbReference type="Pfam" id="PF03590">
    <property type="entry name" value="AsnA"/>
    <property type="match status" value="1"/>
</dbReference>
<dbReference type="PIRSF" id="PIRSF001555">
    <property type="entry name" value="Asp_ammon_ligase"/>
    <property type="match status" value="1"/>
</dbReference>
<dbReference type="SUPFAM" id="SSF55681">
    <property type="entry name" value="Class II aaRS and biotin synthetases"/>
    <property type="match status" value="1"/>
</dbReference>
<dbReference type="PROSITE" id="PS50862">
    <property type="entry name" value="AA_TRNA_LIGASE_II"/>
    <property type="match status" value="1"/>
</dbReference>
<protein>
    <recommendedName>
        <fullName evidence="1">Aspartate--ammonia ligase</fullName>
        <ecNumber evidence="1">6.3.1.1</ecNumber>
    </recommendedName>
    <alternativeName>
        <fullName evidence="1">Asparagine synthetase A</fullName>
    </alternativeName>
</protein>
<accession>A9MXC1</accession>
<proteinExistence type="inferred from homology"/>
<feature type="chain" id="PRO_1000081983" description="Aspartate--ammonia ligase">
    <location>
        <begin position="1"/>
        <end position="330"/>
    </location>
</feature>
<organism>
    <name type="scientific">Salmonella paratyphi B (strain ATCC BAA-1250 / SPB7)</name>
    <dbReference type="NCBI Taxonomy" id="1016998"/>
    <lineage>
        <taxon>Bacteria</taxon>
        <taxon>Pseudomonadati</taxon>
        <taxon>Pseudomonadota</taxon>
        <taxon>Gammaproteobacteria</taxon>
        <taxon>Enterobacterales</taxon>
        <taxon>Enterobacteriaceae</taxon>
        <taxon>Salmonella</taxon>
    </lineage>
</organism>
<keyword id="KW-0028">Amino-acid biosynthesis</keyword>
<keyword id="KW-0061">Asparagine biosynthesis</keyword>
<keyword id="KW-0067">ATP-binding</keyword>
<keyword id="KW-0963">Cytoplasm</keyword>
<keyword id="KW-0436">Ligase</keyword>
<keyword id="KW-0547">Nucleotide-binding</keyword>
<name>ASNA_SALPB</name>
<sequence>MKTAYIAKQRQISFVKSHFSRQLEERLGLIEVQAPILSRVGDGTQDNLSGCEKAVQVKVKALPDAQFEVVHSLAKWKRQTLGQHDFSAGEGLYTHMKALRPDEDRLSPLHSVYVDQWDWERVMGDGERQFSTLKSTVEAIWAGIKATEAEVHKQFGLAPFLPDQIHFVHSQELLARFPDLDAKGRERAIAKELGAVFLVGIGGKLSDGHRHDVRAPDYDDWSSASELGYAGLNGDILVWNPVLEDAFELSSMGIRVDADTLMRQLALTGDEDRLQLEWHQALLRGEMPQTIGGGIGQSRLTMLLLQLPHIGQVQCGVWPAQVRESIPAIL</sequence>